<reference key="1">
    <citation type="submission" date="2007-10" db="EMBL/GenBank/DDBJ databases">
        <title>Complete sequence of chromosome of Desulforudis audaxviator MP104C.</title>
        <authorList>
            <person name="Copeland A."/>
            <person name="Lucas S."/>
            <person name="Lapidus A."/>
            <person name="Barry K."/>
            <person name="Glavina del Rio T."/>
            <person name="Dalin E."/>
            <person name="Tice H."/>
            <person name="Bruce D."/>
            <person name="Pitluck S."/>
            <person name="Lowry S.R."/>
            <person name="Larimer F."/>
            <person name="Land M.L."/>
            <person name="Hauser L."/>
            <person name="Kyrpides N."/>
            <person name="Ivanova N.N."/>
            <person name="Richardson P."/>
        </authorList>
    </citation>
    <scope>NUCLEOTIDE SEQUENCE [LARGE SCALE GENOMIC DNA]</scope>
    <source>
        <strain>MP104C</strain>
    </source>
</reference>
<proteinExistence type="inferred from homology"/>
<name>RL3_DESAP</name>
<dbReference type="EMBL" id="CP000860">
    <property type="protein sequence ID" value="ACA58786.1"/>
    <property type="molecule type" value="Genomic_DNA"/>
</dbReference>
<dbReference type="SMR" id="B1I1I8"/>
<dbReference type="STRING" id="477974.Daud_0225"/>
<dbReference type="KEGG" id="dau:Daud_0225"/>
<dbReference type="eggNOG" id="COG0087">
    <property type="taxonomic scope" value="Bacteria"/>
</dbReference>
<dbReference type="HOGENOM" id="CLU_044142_4_1_9"/>
<dbReference type="Proteomes" id="UP000008544">
    <property type="component" value="Chromosome"/>
</dbReference>
<dbReference type="GO" id="GO:0022625">
    <property type="term" value="C:cytosolic large ribosomal subunit"/>
    <property type="evidence" value="ECO:0007669"/>
    <property type="project" value="TreeGrafter"/>
</dbReference>
<dbReference type="GO" id="GO:0019843">
    <property type="term" value="F:rRNA binding"/>
    <property type="evidence" value="ECO:0007669"/>
    <property type="project" value="UniProtKB-UniRule"/>
</dbReference>
<dbReference type="GO" id="GO:0003735">
    <property type="term" value="F:structural constituent of ribosome"/>
    <property type="evidence" value="ECO:0007669"/>
    <property type="project" value="InterPro"/>
</dbReference>
<dbReference type="GO" id="GO:0006412">
    <property type="term" value="P:translation"/>
    <property type="evidence" value="ECO:0007669"/>
    <property type="project" value="UniProtKB-UniRule"/>
</dbReference>
<dbReference type="FunFam" id="2.40.30.10:FF:000004">
    <property type="entry name" value="50S ribosomal protein L3"/>
    <property type="match status" value="1"/>
</dbReference>
<dbReference type="FunFam" id="3.30.160.810:FF:000001">
    <property type="entry name" value="50S ribosomal protein L3"/>
    <property type="match status" value="1"/>
</dbReference>
<dbReference type="Gene3D" id="3.30.160.810">
    <property type="match status" value="1"/>
</dbReference>
<dbReference type="Gene3D" id="2.40.30.10">
    <property type="entry name" value="Translation factors"/>
    <property type="match status" value="1"/>
</dbReference>
<dbReference type="HAMAP" id="MF_01325_B">
    <property type="entry name" value="Ribosomal_uL3_B"/>
    <property type="match status" value="1"/>
</dbReference>
<dbReference type="InterPro" id="IPR000597">
    <property type="entry name" value="Ribosomal_uL3"/>
</dbReference>
<dbReference type="InterPro" id="IPR019927">
    <property type="entry name" value="Ribosomal_uL3_bac/org-type"/>
</dbReference>
<dbReference type="InterPro" id="IPR019926">
    <property type="entry name" value="Ribosomal_uL3_CS"/>
</dbReference>
<dbReference type="InterPro" id="IPR009000">
    <property type="entry name" value="Transl_B-barrel_sf"/>
</dbReference>
<dbReference type="NCBIfam" id="TIGR03625">
    <property type="entry name" value="L3_bact"/>
    <property type="match status" value="1"/>
</dbReference>
<dbReference type="PANTHER" id="PTHR11229">
    <property type="entry name" value="50S RIBOSOMAL PROTEIN L3"/>
    <property type="match status" value="1"/>
</dbReference>
<dbReference type="PANTHER" id="PTHR11229:SF16">
    <property type="entry name" value="LARGE RIBOSOMAL SUBUNIT PROTEIN UL3C"/>
    <property type="match status" value="1"/>
</dbReference>
<dbReference type="Pfam" id="PF00297">
    <property type="entry name" value="Ribosomal_L3"/>
    <property type="match status" value="1"/>
</dbReference>
<dbReference type="SUPFAM" id="SSF50447">
    <property type="entry name" value="Translation proteins"/>
    <property type="match status" value="1"/>
</dbReference>
<dbReference type="PROSITE" id="PS00474">
    <property type="entry name" value="RIBOSOMAL_L3"/>
    <property type="match status" value="1"/>
</dbReference>
<organism>
    <name type="scientific">Desulforudis audaxviator (strain MP104C)</name>
    <dbReference type="NCBI Taxonomy" id="477974"/>
    <lineage>
        <taxon>Bacteria</taxon>
        <taxon>Bacillati</taxon>
        <taxon>Bacillota</taxon>
        <taxon>Clostridia</taxon>
        <taxon>Thermoanaerobacterales</taxon>
        <taxon>Candidatus Desulforudaceae</taxon>
        <taxon>Candidatus Desulforudis</taxon>
    </lineage>
</organism>
<comment type="function">
    <text evidence="1">One of the primary rRNA binding proteins, it binds directly near the 3'-end of the 23S rRNA, where it nucleates assembly of the 50S subunit.</text>
</comment>
<comment type="subunit">
    <text evidence="1">Part of the 50S ribosomal subunit. Forms a cluster with proteins L14 and L19.</text>
</comment>
<comment type="similarity">
    <text evidence="1">Belongs to the universal ribosomal protein uL3 family.</text>
</comment>
<feature type="chain" id="PRO_0000353602" description="Large ribosomal subunit protein uL3">
    <location>
        <begin position="1"/>
        <end position="213"/>
    </location>
</feature>
<evidence type="ECO:0000255" key="1">
    <source>
        <dbReference type="HAMAP-Rule" id="MF_01325"/>
    </source>
</evidence>
<evidence type="ECO:0000305" key="2"/>
<gene>
    <name evidence="1" type="primary">rplC</name>
    <name type="ordered locus">Daud_0225</name>
</gene>
<sequence length="213" mass="22799">MWLMAKGILGRKLGMSRFFTAEGVAVPVTLIEAGPCTVVQKKTPDTDGYSAVQLGFMEQPAKRVNRPLKGHFGRAGVKPSRFLRELRVADAADYEVGQVLKADLFDVGEIVDVVGTSKGKGFAGGIKRHGFHRGPMGHGSKYHRRPGALAAKGPARVFKGRKLPGRLGGVRVTVQNLEIVKVDPERNLLAVRGAVPGIRGSLVVVKSAVKGNE</sequence>
<protein>
    <recommendedName>
        <fullName evidence="1">Large ribosomal subunit protein uL3</fullName>
    </recommendedName>
    <alternativeName>
        <fullName evidence="2">50S ribosomal protein L3</fullName>
    </alternativeName>
</protein>
<accession>B1I1I8</accession>
<keyword id="KW-1185">Reference proteome</keyword>
<keyword id="KW-0687">Ribonucleoprotein</keyword>
<keyword id="KW-0689">Ribosomal protein</keyword>
<keyword id="KW-0694">RNA-binding</keyword>
<keyword id="KW-0699">rRNA-binding</keyword>